<proteinExistence type="evidence at protein level"/>
<protein>
    <recommendedName>
        <fullName>Muscarinic acetylcholine receptor M2</fullName>
    </recommendedName>
</protein>
<accession>P06199</accession>
<name>ACM2_PIG</name>
<reference key="1">
    <citation type="journal article" date="1986" name="FEBS Lett.">
        <title>Primary structure of porcine cardiac muscarinic acetylcholine receptor deduced from the cDNA sequence.</title>
        <authorList>
            <person name="Kubo T."/>
            <person name="Maeda A."/>
            <person name="Sugimoto K."/>
            <person name="Akiba I."/>
            <person name="Mikami A."/>
            <person name="Takahashi H."/>
            <person name="Haga T."/>
            <person name="Haga K."/>
            <person name="Ichiyama A."/>
            <person name="Kangawa K."/>
            <person name="Matsuo H."/>
            <person name="Hirose T."/>
            <person name="Numa S."/>
        </authorList>
    </citation>
    <scope>NUCLEOTIDE SEQUENCE [MRNA]</scope>
    <source>
        <tissue>Heart</tissue>
    </source>
</reference>
<reference key="2">
    <citation type="journal article" date="1987" name="Science">
        <title>Primary structure and biochemical properties of an M2 muscarinic receptor.</title>
        <authorList>
            <person name="Peralta E.G."/>
            <person name="Winslow J.W."/>
            <person name="Peterson G.L."/>
            <person name="Smith D.H."/>
            <person name="Ashkenazi A."/>
            <person name="Ramachandran J."/>
            <person name="Schimerlik M.I."/>
            <person name="Capon D.J."/>
        </authorList>
    </citation>
    <scope>NUCLEOTIDE SEQUENCE [GENOMIC DNA]</scope>
    <scope>PARTIAL PROTEIN SEQUENCE</scope>
    <scope>SUBCELLULAR LOCATION</scope>
</reference>
<reference key="3">
    <citation type="journal article" date="1997" name="J. Biol. Chem.">
        <title>Synergistic regulation of m2 muscarinic acetylcholine receptor desensitization and sequestration by G protein-coupled receptor kinase-2 and beta-arrestin-1.</title>
        <authorList>
            <person name="Schlador M.L."/>
            <person name="Nathanson N.M."/>
        </authorList>
    </citation>
    <scope>PHOSPHORYLATION</scope>
    <scope>FUNCTION</scope>
    <scope>SUBCELLULAR LOCATION</scope>
</reference>
<reference key="4">
    <citation type="journal article" date="2010" name="PLoS ONE">
        <title>RACK1 associates with muscarinic receptors and regulates M(2) receptor trafficking.</title>
        <authorList>
            <person name="Reiner C.L."/>
            <person name="McCullar J.S."/>
            <person name="Kow R.L."/>
            <person name="Le J.H."/>
            <person name="Goodlett D.R."/>
            <person name="Nathanson N.M."/>
        </authorList>
    </citation>
    <scope>INTERACTION WITH RACK1</scope>
    <scope>SUBCELLULAR LOCATION</scope>
</reference>
<keyword id="KW-1003">Cell membrane</keyword>
<keyword id="KW-0903">Direct protein sequencing</keyword>
<keyword id="KW-1015">Disulfide bond</keyword>
<keyword id="KW-0297">G-protein coupled receptor</keyword>
<keyword id="KW-0325">Glycoprotein</keyword>
<keyword id="KW-0472">Membrane</keyword>
<keyword id="KW-0597">Phosphoprotein</keyword>
<keyword id="KW-0628">Postsynaptic cell membrane</keyword>
<keyword id="KW-0675">Receptor</keyword>
<keyword id="KW-1185">Reference proteome</keyword>
<keyword id="KW-0770">Synapse</keyword>
<keyword id="KW-0807">Transducer</keyword>
<keyword id="KW-0812">Transmembrane</keyword>
<keyword id="KW-1133">Transmembrane helix</keyword>
<sequence>MNNSTNSSNSGLALTSPYKTFEVVFIVLVAGSLSLVTIIGNILVMVSIKVNRHLQTVNNYFLFSLACADLIIGVFSMNLYTLYTVIGYWPLGPVVCDLWLALDYVVSNASVMNLLIISFDRYFCVTKPLTYPVKRTTKMAGMMIAAAWVLSFILWAPAILFWQFIVGVRTVEDGECYIQFFSNAAVTFGTAIAAFYLPVIIMTVLYWHISRASKSRIKKDKKEPVANQEPVSPSLVQGRIVKPNNNNMPGSDEALEHNKIQNGKAPRDAVTENCVQGEEKESSNDSTSVSAVASNMRDDEITQDENTVSTSLGHSKDENSKQTCIKIVTKTQKSDSCTPANTTVELVGSSGQNGDEKQNIVARKIVKMTKQPAKKKPPPSREKKVTRTILAILLAFIITWAPYNVMVLINTFCAPCIPNTVWTIGYWLCYINSTINPACYALCNATFKKTFKHLLMCHYKNIGATR</sequence>
<organism>
    <name type="scientific">Sus scrofa</name>
    <name type="common">Pig</name>
    <dbReference type="NCBI Taxonomy" id="9823"/>
    <lineage>
        <taxon>Eukaryota</taxon>
        <taxon>Metazoa</taxon>
        <taxon>Chordata</taxon>
        <taxon>Craniata</taxon>
        <taxon>Vertebrata</taxon>
        <taxon>Euteleostomi</taxon>
        <taxon>Mammalia</taxon>
        <taxon>Eutheria</taxon>
        <taxon>Laurasiatheria</taxon>
        <taxon>Artiodactyla</taxon>
        <taxon>Suina</taxon>
        <taxon>Suidae</taxon>
        <taxon>Sus</taxon>
    </lineage>
</organism>
<comment type="function">
    <text evidence="7">The muscarinic acetylcholine receptor mediates various cellular responses, including inhibition of adenylate cyclase, breakdown of phosphoinositides and modulation of potassium channels through the action of G proteins. Primary transducing effect is adenylate cyclase inhibition.</text>
</comment>
<comment type="subunit">
    <text evidence="1 6">Interacts with ARRB1 and ARRB2 (By similarity). Interacts with RACK1; the interaction regulates CHRM2 internalization.</text>
</comment>
<comment type="subcellular location">
    <subcellularLocation>
        <location evidence="9 10 11">Cell membrane</location>
        <topology evidence="8">Multi-pass membrane protein</topology>
    </subcellularLocation>
    <subcellularLocation>
        <location evidence="8">Postsynaptic cell membrane</location>
        <topology evidence="8">Multi-pass membrane protein</topology>
    </subcellularLocation>
    <text evidence="7">Phosphorylation in response to agonist binding promotes receptor internalization.</text>
</comment>
<comment type="PTM">
    <text evidence="7">Phosphorylated in response to agonist treatment.</text>
</comment>
<comment type="similarity">
    <text evidence="4">Belongs to the G-protein coupled receptor 1 family. Muscarinic acetylcholine receptor subfamily. CHRM2 sub-subfamily.</text>
</comment>
<dbReference type="EMBL" id="X04708">
    <property type="protein sequence ID" value="CAA28413.1"/>
    <property type="molecule type" value="mRNA"/>
</dbReference>
<dbReference type="EMBL" id="M16331">
    <property type="protein sequence ID" value="AAA30986.1"/>
    <property type="molecule type" value="Genomic_DNA"/>
</dbReference>
<dbReference type="PIR" id="A27386">
    <property type="entry name" value="A27386"/>
</dbReference>
<dbReference type="RefSeq" id="NP_999426.1">
    <property type="nucleotide sequence ID" value="NM_214261.1"/>
</dbReference>
<dbReference type="SMR" id="P06199"/>
<dbReference type="CORUM" id="P06199"/>
<dbReference type="FunCoup" id="P06199">
    <property type="interactions" value="135"/>
</dbReference>
<dbReference type="IntAct" id="P06199">
    <property type="interactions" value="1"/>
</dbReference>
<dbReference type="STRING" id="9823.ENSSSCP00000053072"/>
<dbReference type="BindingDB" id="P06199"/>
<dbReference type="ChEMBL" id="CHEMBL4781"/>
<dbReference type="DrugCentral" id="P06199"/>
<dbReference type="GlyCosmos" id="P06199">
    <property type="glycosylation" value="3 sites, No reported glycans"/>
</dbReference>
<dbReference type="GlyGen" id="P06199">
    <property type="glycosylation" value="3 sites"/>
</dbReference>
<dbReference type="Ensembl" id="ENSSSCT00015049354.1">
    <property type="protein sequence ID" value="ENSSSCP00015019670.1"/>
    <property type="gene ID" value="ENSSSCG00015037045.1"/>
</dbReference>
<dbReference type="Ensembl" id="ENSSSCT00015049468.1">
    <property type="protein sequence ID" value="ENSSSCP00015019722.1"/>
    <property type="gene ID" value="ENSSSCG00015037045.1"/>
</dbReference>
<dbReference type="Ensembl" id="ENSSSCT00025012609.1">
    <property type="protein sequence ID" value="ENSSSCP00025004979.1"/>
    <property type="gene ID" value="ENSSSCG00025009535.1"/>
</dbReference>
<dbReference type="Ensembl" id="ENSSSCT00030091367.1">
    <property type="protein sequence ID" value="ENSSSCP00030042034.1"/>
    <property type="gene ID" value="ENSSSCG00030065386.1"/>
</dbReference>
<dbReference type="Ensembl" id="ENSSSCT00035017089.1">
    <property type="protein sequence ID" value="ENSSSCP00035005909.1"/>
    <property type="gene ID" value="ENSSSCG00035013538.1"/>
</dbReference>
<dbReference type="Ensembl" id="ENSSSCT00045039850.1">
    <property type="protein sequence ID" value="ENSSSCP00045027745.1"/>
    <property type="gene ID" value="ENSSSCG00045023330.1"/>
</dbReference>
<dbReference type="Ensembl" id="ENSSSCT00050056187.1">
    <property type="protein sequence ID" value="ENSSSCP00050023878.1"/>
    <property type="gene ID" value="ENSSSCG00050041436.1"/>
</dbReference>
<dbReference type="Ensembl" id="ENSSSCT00055053377.1">
    <property type="protein sequence ID" value="ENSSSCP00055042595.1"/>
    <property type="gene ID" value="ENSSSCG00055027008.1"/>
</dbReference>
<dbReference type="Ensembl" id="ENSSSCT00055053400.1">
    <property type="protein sequence ID" value="ENSSSCP00055042610.1"/>
    <property type="gene ID" value="ENSSSCG00055027008.1"/>
</dbReference>
<dbReference type="Ensembl" id="ENSSSCT00060086672.1">
    <property type="protein sequence ID" value="ENSSSCP00060037487.1"/>
    <property type="gene ID" value="ENSSSCG00060063522.1"/>
</dbReference>
<dbReference type="Ensembl" id="ENSSSCT00065006367.1">
    <property type="protein sequence ID" value="ENSSSCP00065002839.1"/>
    <property type="gene ID" value="ENSSSCG00065004639.1"/>
</dbReference>
<dbReference type="Ensembl" id="ENSSSCT00070051184.1">
    <property type="protein sequence ID" value="ENSSSCP00070043296.1"/>
    <property type="gene ID" value="ENSSSCG00070025599.1"/>
</dbReference>
<dbReference type="Ensembl" id="ENSSSCT00085003258">
    <property type="protein sequence ID" value="ENSSSCP00085002381"/>
    <property type="gene ID" value="ENSSSCG00085001979"/>
</dbReference>
<dbReference type="Ensembl" id="ENSSSCT00085003260">
    <property type="protein sequence ID" value="ENSSSCP00085002383"/>
    <property type="gene ID" value="ENSSSCG00085001979"/>
</dbReference>
<dbReference type="Ensembl" id="ENSSSCT00085003266">
    <property type="protein sequence ID" value="ENSSSCP00085002389"/>
    <property type="gene ID" value="ENSSSCG00085001979"/>
</dbReference>
<dbReference type="Ensembl" id="ENSSSCT00085003272">
    <property type="protein sequence ID" value="ENSSSCP00085002395"/>
    <property type="gene ID" value="ENSSSCG00085001979"/>
</dbReference>
<dbReference type="Ensembl" id="ENSSSCT00085003276">
    <property type="protein sequence ID" value="ENSSSCP00085002399"/>
    <property type="gene ID" value="ENSSSCG00085001979"/>
</dbReference>
<dbReference type="Ensembl" id="ENSSSCT00085003279">
    <property type="protein sequence ID" value="ENSSSCP00085002402"/>
    <property type="gene ID" value="ENSSSCG00085001979"/>
</dbReference>
<dbReference type="Ensembl" id="ENSSSCT00085003287">
    <property type="protein sequence ID" value="ENSSSCP00085002410"/>
    <property type="gene ID" value="ENSSSCG00085001979"/>
</dbReference>
<dbReference type="Ensembl" id="ENSSSCT00090004596">
    <property type="protein sequence ID" value="ENSSSCP00090002732"/>
    <property type="gene ID" value="ENSSSCG00090002716"/>
</dbReference>
<dbReference type="Ensembl" id="ENSSSCT00090004618">
    <property type="protein sequence ID" value="ENSSSCP00090002745"/>
    <property type="gene ID" value="ENSSSCG00090002716"/>
</dbReference>
<dbReference type="Ensembl" id="ENSSSCT00090004627">
    <property type="protein sequence ID" value="ENSSSCP00090002751"/>
    <property type="gene ID" value="ENSSSCG00090002716"/>
</dbReference>
<dbReference type="Ensembl" id="ENSSSCT00090004633">
    <property type="protein sequence ID" value="ENSSSCP00090002756"/>
    <property type="gene ID" value="ENSSSCG00090002716"/>
</dbReference>
<dbReference type="Ensembl" id="ENSSSCT00090004639">
    <property type="protein sequence ID" value="ENSSSCP00090002761"/>
    <property type="gene ID" value="ENSSSCG00090002716"/>
</dbReference>
<dbReference type="Ensembl" id="ENSSSCT00090004649">
    <property type="protein sequence ID" value="ENSSSCP00090002768"/>
    <property type="gene ID" value="ENSSSCG00090002716"/>
</dbReference>
<dbReference type="Ensembl" id="ENSSSCT00090004655">
    <property type="protein sequence ID" value="ENSSSCP00090002772"/>
    <property type="gene ID" value="ENSSSCG00090002716"/>
</dbReference>
<dbReference type="Ensembl" id="ENSSSCT00110072235">
    <property type="protein sequence ID" value="ENSSSCP00110050931"/>
    <property type="gene ID" value="ENSSSCG00110037950"/>
</dbReference>
<dbReference type="Ensembl" id="ENSSSCT00110072237">
    <property type="protein sequence ID" value="ENSSSCP00110050933"/>
    <property type="gene ID" value="ENSSSCG00110037950"/>
</dbReference>
<dbReference type="Ensembl" id="ENSSSCT00110072240">
    <property type="protein sequence ID" value="ENSSSCP00110050935"/>
    <property type="gene ID" value="ENSSSCG00110037950"/>
</dbReference>
<dbReference type="Ensembl" id="ENSSSCT00110072241">
    <property type="protein sequence ID" value="ENSSSCP00110050937"/>
    <property type="gene ID" value="ENSSSCG00110037950"/>
</dbReference>
<dbReference type="Ensembl" id="ENSSSCT00110072243">
    <property type="protein sequence ID" value="ENSSSCP00110050939"/>
    <property type="gene ID" value="ENSSSCG00110037950"/>
</dbReference>
<dbReference type="Ensembl" id="ENSSSCT00110072246">
    <property type="protein sequence ID" value="ENSSSCP00110050942"/>
    <property type="gene ID" value="ENSSSCG00110037950"/>
</dbReference>
<dbReference type="Ensembl" id="ENSSSCT00110072249">
    <property type="protein sequence ID" value="ENSSSCP00110050945"/>
    <property type="gene ID" value="ENSSSCG00110037950"/>
</dbReference>
<dbReference type="Ensembl" id="ENSSSCT00115025420">
    <property type="protein sequence ID" value="ENSSSCP00115024086"/>
    <property type="gene ID" value="ENSSSCG00115014663"/>
</dbReference>
<dbReference type="Ensembl" id="ENSSSCT00130000720">
    <property type="protein sequence ID" value="ENSSSCP00130000437"/>
    <property type="gene ID" value="ENSSSCG00130000452"/>
</dbReference>
<dbReference type="Ensembl" id="ENSSSCT00130000721">
    <property type="protein sequence ID" value="ENSSSCP00130000438"/>
    <property type="gene ID" value="ENSSSCG00130000452"/>
</dbReference>
<dbReference type="Ensembl" id="ENSSSCT00130000723">
    <property type="protein sequence ID" value="ENSSSCP00130000439"/>
    <property type="gene ID" value="ENSSSCG00130000452"/>
</dbReference>
<dbReference type="Ensembl" id="ENSSSCT00130000724">
    <property type="protein sequence ID" value="ENSSSCP00130000440"/>
    <property type="gene ID" value="ENSSSCG00130000452"/>
</dbReference>
<dbReference type="Ensembl" id="ENSSSCT00130000725">
    <property type="protein sequence ID" value="ENSSSCP00130000441"/>
    <property type="gene ID" value="ENSSSCG00130000452"/>
</dbReference>
<dbReference type="Ensembl" id="ENSSSCT00130000726">
    <property type="protein sequence ID" value="ENSSSCP00130000442"/>
    <property type="gene ID" value="ENSSSCG00130000452"/>
</dbReference>
<dbReference type="GeneID" id="397498"/>
<dbReference type="KEGG" id="ssc:397498"/>
<dbReference type="CTD" id="1129"/>
<dbReference type="InParanoid" id="P06199"/>
<dbReference type="OrthoDB" id="10071887at2759"/>
<dbReference type="Reactome" id="R-SSC-390648">
    <property type="pathway name" value="Muscarinic acetylcholine receptors"/>
</dbReference>
<dbReference type="Reactome" id="R-SSC-418594">
    <property type="pathway name" value="G alpha (i) signalling events"/>
</dbReference>
<dbReference type="Reactome" id="R-SSC-8856825">
    <property type="pathway name" value="Cargo recognition for clathrin-mediated endocytosis"/>
</dbReference>
<dbReference type="Reactome" id="R-SSC-8856828">
    <property type="pathway name" value="Clathrin-mediated endocytosis"/>
</dbReference>
<dbReference type="PRO" id="PR:P06199"/>
<dbReference type="Proteomes" id="UP000008227">
    <property type="component" value="Unplaced"/>
</dbReference>
<dbReference type="Proteomes" id="UP000314985">
    <property type="component" value="Chromosome 18"/>
</dbReference>
<dbReference type="Proteomes" id="UP000694570">
    <property type="component" value="Unplaced"/>
</dbReference>
<dbReference type="Proteomes" id="UP000694571">
    <property type="component" value="Unplaced"/>
</dbReference>
<dbReference type="Proteomes" id="UP000694720">
    <property type="component" value="Unplaced"/>
</dbReference>
<dbReference type="Proteomes" id="UP000694722">
    <property type="component" value="Unplaced"/>
</dbReference>
<dbReference type="Proteomes" id="UP000694723">
    <property type="component" value="Unplaced"/>
</dbReference>
<dbReference type="Proteomes" id="UP000694724">
    <property type="component" value="Unplaced"/>
</dbReference>
<dbReference type="Proteomes" id="UP000694725">
    <property type="component" value="Unplaced"/>
</dbReference>
<dbReference type="Proteomes" id="UP000694726">
    <property type="component" value="Unplaced"/>
</dbReference>
<dbReference type="Proteomes" id="UP000694727">
    <property type="component" value="Unplaced"/>
</dbReference>
<dbReference type="Proteomes" id="UP000694728">
    <property type="component" value="Unplaced"/>
</dbReference>
<dbReference type="GO" id="GO:0030425">
    <property type="term" value="C:dendrite"/>
    <property type="evidence" value="ECO:0000318"/>
    <property type="project" value="GO_Central"/>
</dbReference>
<dbReference type="GO" id="GO:0005886">
    <property type="term" value="C:plasma membrane"/>
    <property type="evidence" value="ECO:0000250"/>
    <property type="project" value="UniProtKB"/>
</dbReference>
<dbReference type="GO" id="GO:0045211">
    <property type="term" value="C:postsynaptic membrane"/>
    <property type="evidence" value="ECO:0007669"/>
    <property type="project" value="UniProtKB-SubCell"/>
</dbReference>
<dbReference type="GO" id="GO:0045202">
    <property type="term" value="C:synapse"/>
    <property type="evidence" value="ECO:0000318"/>
    <property type="project" value="GO_Central"/>
</dbReference>
<dbReference type="GO" id="GO:0016907">
    <property type="term" value="F:G protein-coupled acetylcholine receptor activity"/>
    <property type="evidence" value="ECO:0000250"/>
    <property type="project" value="UniProtKB"/>
</dbReference>
<dbReference type="GO" id="GO:0007197">
    <property type="term" value="P:adenylate cyclase-inhibiting G protein-coupled acetylcholine receptor signaling pathway"/>
    <property type="evidence" value="ECO:0000318"/>
    <property type="project" value="GO_Central"/>
</dbReference>
<dbReference type="GO" id="GO:0007268">
    <property type="term" value="P:chemical synaptic transmission"/>
    <property type="evidence" value="ECO:0000318"/>
    <property type="project" value="GO_Central"/>
</dbReference>
<dbReference type="GO" id="GO:0007213">
    <property type="term" value="P:G protein-coupled acetylcholine receptor signaling pathway"/>
    <property type="evidence" value="ECO:0000250"/>
    <property type="project" value="UniProtKB"/>
</dbReference>
<dbReference type="GO" id="GO:0007187">
    <property type="term" value="P:G protein-coupled receptor signaling pathway, coupled to cyclic nucleotide second messenger"/>
    <property type="evidence" value="ECO:0000318"/>
    <property type="project" value="GO_Central"/>
</dbReference>
<dbReference type="GO" id="GO:0008016">
    <property type="term" value="P:regulation of heart contraction"/>
    <property type="evidence" value="ECO:0007669"/>
    <property type="project" value="InterPro"/>
</dbReference>
<dbReference type="GO" id="GO:0006940">
    <property type="term" value="P:regulation of smooth muscle contraction"/>
    <property type="evidence" value="ECO:0000318"/>
    <property type="project" value="GO_Central"/>
</dbReference>
<dbReference type="CDD" id="cd15297">
    <property type="entry name" value="7tmA_mAChR_M2"/>
    <property type="match status" value="1"/>
</dbReference>
<dbReference type="FunFam" id="1.20.1070.10:FF:000038">
    <property type="entry name" value="Muscarinic acetylcholine receptor"/>
    <property type="match status" value="1"/>
</dbReference>
<dbReference type="FunFam" id="1.20.1070.10:FF:000041">
    <property type="entry name" value="Muscarinic acetylcholine receptor"/>
    <property type="match status" value="1"/>
</dbReference>
<dbReference type="Gene3D" id="1.20.1070.10">
    <property type="entry name" value="Rhodopsin 7-helix transmembrane proteins"/>
    <property type="match status" value="2"/>
</dbReference>
<dbReference type="InterPro" id="IPR000276">
    <property type="entry name" value="GPCR_Rhodpsn"/>
</dbReference>
<dbReference type="InterPro" id="IPR017452">
    <property type="entry name" value="GPCR_Rhodpsn_7TM"/>
</dbReference>
<dbReference type="InterPro" id="IPR001065">
    <property type="entry name" value="Musac_Ach_M2_rcpt"/>
</dbReference>
<dbReference type="InterPro" id="IPR000995">
    <property type="entry name" value="Musac_Ach_rcpt"/>
</dbReference>
<dbReference type="PANTHER" id="PTHR24247">
    <property type="entry name" value="5-HYDROXYTRYPTAMINE RECEPTOR"/>
    <property type="match status" value="1"/>
</dbReference>
<dbReference type="PANTHER" id="PTHR24247:SF207">
    <property type="entry name" value="MUSCARINIC ACETYLCHOLINE RECEPTOR M2"/>
    <property type="match status" value="1"/>
</dbReference>
<dbReference type="Pfam" id="PF00001">
    <property type="entry name" value="7tm_1"/>
    <property type="match status" value="1"/>
</dbReference>
<dbReference type="PRINTS" id="PR00237">
    <property type="entry name" value="GPCRRHODOPSN"/>
</dbReference>
<dbReference type="PRINTS" id="PR00243">
    <property type="entry name" value="MUSCARINICR"/>
</dbReference>
<dbReference type="PRINTS" id="PR00539">
    <property type="entry name" value="MUSCRINICM2R"/>
</dbReference>
<dbReference type="SUPFAM" id="SSF81321">
    <property type="entry name" value="Family A G protein-coupled receptor-like"/>
    <property type="match status" value="1"/>
</dbReference>
<dbReference type="PROSITE" id="PS00237">
    <property type="entry name" value="G_PROTEIN_RECEP_F1_1"/>
    <property type="match status" value="1"/>
</dbReference>
<dbReference type="PROSITE" id="PS50262">
    <property type="entry name" value="G_PROTEIN_RECEP_F1_2"/>
    <property type="match status" value="1"/>
</dbReference>
<gene>
    <name type="primary">CHRM2</name>
</gene>
<evidence type="ECO:0000250" key="1"/>
<evidence type="ECO:0000250" key="2">
    <source>
        <dbReference type="UniProtKB" id="Q9ERZ4"/>
    </source>
</evidence>
<evidence type="ECO:0000255" key="3"/>
<evidence type="ECO:0000255" key="4">
    <source>
        <dbReference type="PROSITE-ProRule" id="PRU00521"/>
    </source>
</evidence>
<evidence type="ECO:0000256" key="5">
    <source>
        <dbReference type="SAM" id="MobiDB-lite"/>
    </source>
</evidence>
<evidence type="ECO:0000269" key="6">
    <source>
    </source>
</evidence>
<evidence type="ECO:0000269" key="7">
    <source>
    </source>
</evidence>
<evidence type="ECO:0000305" key="8"/>
<evidence type="ECO:0000305" key="9">
    <source>
    </source>
</evidence>
<evidence type="ECO:0000305" key="10">
    <source>
    </source>
</evidence>
<evidence type="ECO:0000305" key="11">
    <source>
    </source>
</evidence>
<feature type="chain" id="PRO_0000069024" description="Muscarinic acetylcholine receptor M2">
    <location>
        <begin position="1"/>
        <end position="466"/>
    </location>
</feature>
<feature type="topological domain" description="Extracellular" evidence="1">
    <location>
        <begin position="1"/>
        <end position="22"/>
    </location>
</feature>
<feature type="transmembrane region" description="Helical; Name=1" evidence="1">
    <location>
        <begin position="23"/>
        <end position="45"/>
    </location>
</feature>
<feature type="topological domain" description="Cytoplasmic" evidence="1">
    <location>
        <begin position="46"/>
        <end position="59"/>
    </location>
</feature>
<feature type="transmembrane region" description="Helical; Name=2" evidence="1">
    <location>
        <begin position="60"/>
        <end position="80"/>
    </location>
</feature>
<feature type="topological domain" description="Extracellular" evidence="1">
    <location>
        <begin position="81"/>
        <end position="97"/>
    </location>
</feature>
<feature type="transmembrane region" description="Helical; Name=3" evidence="1">
    <location>
        <begin position="98"/>
        <end position="119"/>
    </location>
</feature>
<feature type="topological domain" description="Cytoplasmic" evidence="1">
    <location>
        <begin position="120"/>
        <end position="139"/>
    </location>
</feature>
<feature type="transmembrane region" description="Helical; Name=4" evidence="1">
    <location>
        <begin position="140"/>
        <end position="162"/>
    </location>
</feature>
<feature type="topological domain" description="Extracellular" evidence="1">
    <location>
        <begin position="163"/>
        <end position="184"/>
    </location>
</feature>
<feature type="transmembrane region" description="Helical; Name=5" evidence="1">
    <location>
        <begin position="185"/>
        <end position="209"/>
    </location>
</feature>
<feature type="topological domain" description="Cytoplasmic" evidence="1">
    <location>
        <begin position="210"/>
        <end position="387"/>
    </location>
</feature>
<feature type="transmembrane region" description="Helical; Name=6" evidence="1">
    <location>
        <begin position="388"/>
        <end position="410"/>
    </location>
</feature>
<feature type="topological domain" description="Extracellular" evidence="1">
    <location>
        <begin position="411"/>
        <end position="418"/>
    </location>
</feature>
<feature type="transmembrane region" description="Helical; Name=7" evidence="1">
    <location>
        <begin position="419"/>
        <end position="442"/>
    </location>
</feature>
<feature type="topological domain" description="Cytoplasmic" evidence="1">
    <location>
        <begin position="443"/>
        <end position="466"/>
    </location>
</feature>
<feature type="region of interest" description="Disordered" evidence="5">
    <location>
        <begin position="218"/>
        <end position="320"/>
    </location>
</feature>
<feature type="short sequence motif" description="Important for signaling">
    <location>
        <begin position="120"/>
        <end position="122"/>
    </location>
</feature>
<feature type="short sequence motif" description="Important for signaling">
    <location>
        <begin position="436"/>
        <end position="440"/>
    </location>
</feature>
<feature type="compositionally biased region" description="Basic and acidic residues" evidence="5">
    <location>
        <begin position="254"/>
        <end position="270"/>
    </location>
</feature>
<feature type="compositionally biased region" description="Polar residues" evidence="5">
    <location>
        <begin position="284"/>
        <end position="293"/>
    </location>
</feature>
<feature type="compositionally biased region" description="Polar residues" evidence="5">
    <location>
        <begin position="304"/>
        <end position="313"/>
    </location>
</feature>
<feature type="modified residue" description="Phosphoserine" evidence="2">
    <location>
        <position position="232"/>
    </location>
</feature>
<feature type="modified residue" description="Phosphothreonine" evidence="3">
    <location>
        <position position="446"/>
    </location>
</feature>
<feature type="modified residue" description="Phosphothreonine" evidence="3">
    <location>
        <position position="450"/>
    </location>
</feature>
<feature type="modified residue" description="Phosphothreonine" evidence="3">
    <location>
        <position position="465"/>
    </location>
</feature>
<feature type="glycosylation site" description="N-linked (GlcNAc...) asparagine" evidence="3">
    <location>
        <position position="2"/>
    </location>
</feature>
<feature type="glycosylation site" description="N-linked (GlcNAc...) asparagine" evidence="3">
    <location>
        <position position="3"/>
    </location>
</feature>
<feature type="glycosylation site" description="N-linked (GlcNAc...) asparagine" evidence="3">
    <location>
        <position position="6"/>
    </location>
</feature>
<feature type="disulfide bond" evidence="4">
    <location>
        <begin position="96"/>
        <end position="176"/>
    </location>
</feature>
<feature type="disulfide bond" evidence="4">
    <location>
        <begin position="413"/>
        <end position="416"/>
    </location>
</feature>
<feature type="sequence conflict" description="In Ref. 2; AAA30986." evidence="8" ref="2">
    <original>K</original>
    <variation>N</variation>
    <location>
        <position position="330"/>
    </location>
</feature>